<comment type="function">
    <text evidence="1">Catalyzes the NADPH-dependent reduction of L-glutamate 5-phosphate into L-glutamate 5-semialdehyde and phosphate. The product spontaneously undergoes cyclization to form 1-pyrroline-5-carboxylate.</text>
</comment>
<comment type="catalytic activity">
    <reaction evidence="1">
        <text>L-glutamate 5-semialdehyde + phosphate + NADP(+) = L-glutamyl 5-phosphate + NADPH + H(+)</text>
        <dbReference type="Rhea" id="RHEA:19541"/>
        <dbReference type="ChEBI" id="CHEBI:15378"/>
        <dbReference type="ChEBI" id="CHEBI:43474"/>
        <dbReference type="ChEBI" id="CHEBI:57783"/>
        <dbReference type="ChEBI" id="CHEBI:58066"/>
        <dbReference type="ChEBI" id="CHEBI:58274"/>
        <dbReference type="ChEBI" id="CHEBI:58349"/>
        <dbReference type="EC" id="1.2.1.41"/>
    </reaction>
</comment>
<comment type="pathway">
    <text evidence="1">Amino-acid biosynthesis; L-proline biosynthesis; L-glutamate 5-semialdehyde from L-glutamate: step 2/2.</text>
</comment>
<comment type="subcellular location">
    <subcellularLocation>
        <location evidence="1">Cytoplasm</location>
    </subcellularLocation>
</comment>
<comment type="similarity">
    <text evidence="1">Belongs to the gamma-glutamyl phosphate reductase family.</text>
</comment>
<keyword id="KW-0028">Amino-acid biosynthesis</keyword>
<keyword id="KW-0963">Cytoplasm</keyword>
<keyword id="KW-0521">NADP</keyword>
<keyword id="KW-0560">Oxidoreductase</keyword>
<keyword id="KW-0641">Proline biosynthesis</keyword>
<feature type="chain" id="PRO_0000189707" description="Gamma-glutamyl phosphate reductase">
    <location>
        <begin position="1"/>
        <end position="421"/>
    </location>
</feature>
<protein>
    <recommendedName>
        <fullName evidence="1">Gamma-glutamyl phosphate reductase</fullName>
        <shortName evidence="1">GPR</shortName>
        <ecNumber evidence="1">1.2.1.41</ecNumber>
    </recommendedName>
    <alternativeName>
        <fullName evidence="1">Glutamate-5-semialdehyde dehydrogenase</fullName>
    </alternativeName>
    <alternativeName>
        <fullName evidence="1">Glutamyl-gamma-semialdehyde dehydrogenase</fullName>
        <shortName evidence="1">GSA dehydrogenase</shortName>
    </alternativeName>
</protein>
<sequence length="421" mass="44099">MTKDIAQVMAEVGRKAKAAAAPLSIATSEQKNKALNAAADAILEARADILEANRLDLANAEKNGMAASFVDRLTLNEARIDAIAEDIRAIATLPDPVGEVIAEWDRPNGLHIERVRTPLGVIGVIYESRPNVTADAGALCLKAGNAVILRGGSDSAHSSAAIHKALVKGLEAANLPADAIQIVPVTDRAAVGEMLKGLGGAIDVIVPRGGKSLVARVQSEARVPVFAHLEGICHLYIDKSADLDMARRIALDAKMRRTGICGAAETLLVDRAVASTHLAPILGDLAAGGCEIRGSAEVLALYPAAKPATEEDWSTEYLDAIISVALVDGISGAIDHINRYSSHHTEAIVAEDAQTVARFFNEIDSAILLHNASTQFADGGEFGMGAEIGIATGKMHARGPVGVEQLTSFKYRVRGSGQVRG</sequence>
<evidence type="ECO:0000255" key="1">
    <source>
        <dbReference type="HAMAP-Rule" id="MF_00412"/>
    </source>
</evidence>
<gene>
    <name evidence="1" type="primary">proA</name>
    <name type="ordered locus">BR1843</name>
    <name type="ordered locus">BS1330_I1837</name>
</gene>
<proteinExistence type="inferred from homology"/>
<dbReference type="EC" id="1.2.1.41" evidence="1"/>
<dbReference type="EMBL" id="AE014291">
    <property type="protein sequence ID" value="AAN30738.1"/>
    <property type="molecule type" value="Genomic_DNA"/>
</dbReference>
<dbReference type="EMBL" id="CP002997">
    <property type="protein sequence ID" value="AEM19155.1"/>
    <property type="molecule type" value="Genomic_DNA"/>
</dbReference>
<dbReference type="SMR" id="Q8FYM3"/>
<dbReference type="KEGG" id="bms:BR1843"/>
<dbReference type="KEGG" id="bsi:BS1330_I1837"/>
<dbReference type="HOGENOM" id="CLU_030231_0_0_5"/>
<dbReference type="UniPathway" id="UPA00098">
    <property type="reaction ID" value="UER00360"/>
</dbReference>
<dbReference type="Proteomes" id="UP000007104">
    <property type="component" value="Chromosome I"/>
</dbReference>
<dbReference type="GO" id="GO:0005737">
    <property type="term" value="C:cytoplasm"/>
    <property type="evidence" value="ECO:0007669"/>
    <property type="project" value="UniProtKB-SubCell"/>
</dbReference>
<dbReference type="GO" id="GO:0004350">
    <property type="term" value="F:glutamate-5-semialdehyde dehydrogenase activity"/>
    <property type="evidence" value="ECO:0007669"/>
    <property type="project" value="UniProtKB-UniRule"/>
</dbReference>
<dbReference type="GO" id="GO:0050661">
    <property type="term" value="F:NADP binding"/>
    <property type="evidence" value="ECO:0007669"/>
    <property type="project" value="InterPro"/>
</dbReference>
<dbReference type="GO" id="GO:0055129">
    <property type="term" value="P:L-proline biosynthetic process"/>
    <property type="evidence" value="ECO:0007669"/>
    <property type="project" value="UniProtKB-UniRule"/>
</dbReference>
<dbReference type="CDD" id="cd07079">
    <property type="entry name" value="ALDH_F18-19_ProA-GPR"/>
    <property type="match status" value="1"/>
</dbReference>
<dbReference type="Gene3D" id="3.40.605.10">
    <property type="entry name" value="Aldehyde Dehydrogenase, Chain A, domain 1"/>
    <property type="match status" value="1"/>
</dbReference>
<dbReference type="Gene3D" id="3.40.309.10">
    <property type="entry name" value="Aldehyde Dehydrogenase, Chain A, domain 2"/>
    <property type="match status" value="1"/>
</dbReference>
<dbReference type="HAMAP" id="MF_00412">
    <property type="entry name" value="ProA"/>
    <property type="match status" value="1"/>
</dbReference>
<dbReference type="InterPro" id="IPR016161">
    <property type="entry name" value="Ald_DH/histidinol_DH"/>
</dbReference>
<dbReference type="InterPro" id="IPR016163">
    <property type="entry name" value="Ald_DH_C"/>
</dbReference>
<dbReference type="InterPro" id="IPR016162">
    <property type="entry name" value="Ald_DH_N"/>
</dbReference>
<dbReference type="InterPro" id="IPR015590">
    <property type="entry name" value="Aldehyde_DH_dom"/>
</dbReference>
<dbReference type="InterPro" id="IPR020593">
    <property type="entry name" value="G-glutamylP_reductase_CS"/>
</dbReference>
<dbReference type="InterPro" id="IPR012134">
    <property type="entry name" value="Glu-5-SA_DH"/>
</dbReference>
<dbReference type="InterPro" id="IPR000965">
    <property type="entry name" value="GPR_dom"/>
</dbReference>
<dbReference type="NCBIfam" id="NF001221">
    <property type="entry name" value="PRK00197.1"/>
    <property type="match status" value="1"/>
</dbReference>
<dbReference type="NCBIfam" id="TIGR00407">
    <property type="entry name" value="proA"/>
    <property type="match status" value="1"/>
</dbReference>
<dbReference type="PANTHER" id="PTHR11063:SF8">
    <property type="entry name" value="DELTA-1-PYRROLINE-5-CARBOXYLATE SYNTHASE"/>
    <property type="match status" value="1"/>
</dbReference>
<dbReference type="PANTHER" id="PTHR11063">
    <property type="entry name" value="GLUTAMATE SEMIALDEHYDE DEHYDROGENASE"/>
    <property type="match status" value="1"/>
</dbReference>
<dbReference type="Pfam" id="PF00171">
    <property type="entry name" value="Aldedh"/>
    <property type="match status" value="1"/>
</dbReference>
<dbReference type="PIRSF" id="PIRSF000151">
    <property type="entry name" value="GPR"/>
    <property type="match status" value="1"/>
</dbReference>
<dbReference type="SUPFAM" id="SSF53720">
    <property type="entry name" value="ALDH-like"/>
    <property type="match status" value="1"/>
</dbReference>
<dbReference type="PROSITE" id="PS01223">
    <property type="entry name" value="PROA"/>
    <property type="match status" value="1"/>
</dbReference>
<accession>Q8FYM3</accession>
<accession>G0K7Q9</accession>
<organism>
    <name type="scientific">Brucella suis biovar 1 (strain 1330)</name>
    <dbReference type="NCBI Taxonomy" id="204722"/>
    <lineage>
        <taxon>Bacteria</taxon>
        <taxon>Pseudomonadati</taxon>
        <taxon>Pseudomonadota</taxon>
        <taxon>Alphaproteobacteria</taxon>
        <taxon>Hyphomicrobiales</taxon>
        <taxon>Brucellaceae</taxon>
        <taxon>Brucella/Ochrobactrum group</taxon>
        <taxon>Brucella</taxon>
    </lineage>
</organism>
<reference key="1">
    <citation type="journal article" date="2002" name="Proc. Natl. Acad. Sci. U.S.A.">
        <title>The Brucella suis genome reveals fundamental similarities between animal and plant pathogens and symbionts.</title>
        <authorList>
            <person name="Paulsen I.T."/>
            <person name="Seshadri R."/>
            <person name="Nelson K.E."/>
            <person name="Eisen J.A."/>
            <person name="Heidelberg J.F."/>
            <person name="Read T.D."/>
            <person name="Dodson R.J."/>
            <person name="Umayam L.A."/>
            <person name="Brinkac L.M."/>
            <person name="Beanan M.J."/>
            <person name="Daugherty S.C."/>
            <person name="DeBoy R.T."/>
            <person name="Durkin A.S."/>
            <person name="Kolonay J.F."/>
            <person name="Madupu R."/>
            <person name="Nelson W.C."/>
            <person name="Ayodeji B."/>
            <person name="Kraul M."/>
            <person name="Shetty J."/>
            <person name="Malek J.A."/>
            <person name="Van Aken S.E."/>
            <person name="Riedmuller S."/>
            <person name="Tettelin H."/>
            <person name="Gill S.R."/>
            <person name="White O."/>
            <person name="Salzberg S.L."/>
            <person name="Hoover D.L."/>
            <person name="Lindler L.E."/>
            <person name="Halling S.M."/>
            <person name="Boyle S.M."/>
            <person name="Fraser C.M."/>
        </authorList>
    </citation>
    <scope>NUCLEOTIDE SEQUENCE [LARGE SCALE GENOMIC DNA]</scope>
    <source>
        <strain>1330</strain>
    </source>
</reference>
<reference key="2">
    <citation type="journal article" date="2011" name="J. Bacteriol.">
        <title>Revised genome sequence of Brucella suis 1330.</title>
        <authorList>
            <person name="Tae H."/>
            <person name="Shallom S."/>
            <person name="Settlage R."/>
            <person name="Preston D."/>
            <person name="Adams L.G."/>
            <person name="Garner H.R."/>
        </authorList>
    </citation>
    <scope>NUCLEOTIDE SEQUENCE [LARGE SCALE GENOMIC DNA]</scope>
    <source>
        <strain>1330</strain>
    </source>
</reference>
<name>PROA_BRUSU</name>